<reference key="1">
    <citation type="journal article" date="2007" name="J. Bacteriol.">
        <title>Complete genome sequence of Haemophilus somnus (Histophilus somni) strain 129Pt and comparison to Haemophilus ducreyi 35000HP and Haemophilus influenzae Rd.</title>
        <authorList>
            <person name="Challacombe J.F."/>
            <person name="Duncan A.J."/>
            <person name="Brettin T.S."/>
            <person name="Bruce D."/>
            <person name="Chertkov O."/>
            <person name="Detter J.C."/>
            <person name="Han C.S."/>
            <person name="Misra M."/>
            <person name="Richardson P."/>
            <person name="Tapia R."/>
            <person name="Thayer N."/>
            <person name="Xie G."/>
            <person name="Inzana T.J."/>
        </authorList>
    </citation>
    <scope>NUCLEOTIDE SEQUENCE [LARGE SCALE GENOMIC DNA]</scope>
    <source>
        <strain>129Pt</strain>
    </source>
</reference>
<dbReference type="EMBL" id="CP000436">
    <property type="protein sequence ID" value="ABI24662.1"/>
    <property type="molecule type" value="Genomic_DNA"/>
</dbReference>
<dbReference type="SMR" id="Q0I2G9"/>
<dbReference type="KEGG" id="hso:HS_0384"/>
<dbReference type="eggNOG" id="COG4108">
    <property type="taxonomic scope" value="Bacteria"/>
</dbReference>
<dbReference type="HOGENOM" id="CLU_002794_2_1_6"/>
<dbReference type="GO" id="GO:0005829">
    <property type="term" value="C:cytosol"/>
    <property type="evidence" value="ECO:0007669"/>
    <property type="project" value="TreeGrafter"/>
</dbReference>
<dbReference type="GO" id="GO:0005525">
    <property type="term" value="F:GTP binding"/>
    <property type="evidence" value="ECO:0007669"/>
    <property type="project" value="UniProtKB-UniRule"/>
</dbReference>
<dbReference type="GO" id="GO:0003924">
    <property type="term" value="F:GTPase activity"/>
    <property type="evidence" value="ECO:0007669"/>
    <property type="project" value="InterPro"/>
</dbReference>
<dbReference type="GO" id="GO:0097216">
    <property type="term" value="F:guanosine tetraphosphate binding"/>
    <property type="evidence" value="ECO:0007669"/>
    <property type="project" value="UniProtKB-ARBA"/>
</dbReference>
<dbReference type="GO" id="GO:0016150">
    <property type="term" value="F:translation release factor activity, codon nonspecific"/>
    <property type="evidence" value="ECO:0007669"/>
    <property type="project" value="TreeGrafter"/>
</dbReference>
<dbReference type="GO" id="GO:0016149">
    <property type="term" value="F:translation release factor activity, codon specific"/>
    <property type="evidence" value="ECO:0007669"/>
    <property type="project" value="UniProtKB-UniRule"/>
</dbReference>
<dbReference type="GO" id="GO:0006449">
    <property type="term" value="P:regulation of translational termination"/>
    <property type="evidence" value="ECO:0007669"/>
    <property type="project" value="UniProtKB-UniRule"/>
</dbReference>
<dbReference type="CDD" id="cd04169">
    <property type="entry name" value="RF3"/>
    <property type="match status" value="1"/>
</dbReference>
<dbReference type="CDD" id="cd03689">
    <property type="entry name" value="RF3_II"/>
    <property type="match status" value="1"/>
</dbReference>
<dbReference type="CDD" id="cd16259">
    <property type="entry name" value="RF3_III"/>
    <property type="match status" value="1"/>
</dbReference>
<dbReference type="FunFam" id="2.40.30.10:FF:000040">
    <property type="entry name" value="Peptide chain release factor 3"/>
    <property type="match status" value="1"/>
</dbReference>
<dbReference type="FunFam" id="3.30.70.3280:FF:000001">
    <property type="entry name" value="Peptide chain release factor 3"/>
    <property type="match status" value="1"/>
</dbReference>
<dbReference type="FunFam" id="3.40.50.300:FF:000542">
    <property type="entry name" value="Peptide chain release factor 3"/>
    <property type="match status" value="1"/>
</dbReference>
<dbReference type="Gene3D" id="3.40.50.300">
    <property type="entry name" value="P-loop containing nucleotide triphosphate hydrolases"/>
    <property type="match status" value="3"/>
</dbReference>
<dbReference type="Gene3D" id="3.30.70.3280">
    <property type="entry name" value="Peptide chain release factor 3, domain III"/>
    <property type="match status" value="1"/>
</dbReference>
<dbReference type="HAMAP" id="MF_00072">
    <property type="entry name" value="Rel_fac_3"/>
    <property type="match status" value="1"/>
</dbReference>
<dbReference type="InterPro" id="IPR053905">
    <property type="entry name" value="EF-G-like_DII"/>
</dbReference>
<dbReference type="InterPro" id="IPR035647">
    <property type="entry name" value="EFG_III/V"/>
</dbReference>
<dbReference type="InterPro" id="IPR031157">
    <property type="entry name" value="G_TR_CS"/>
</dbReference>
<dbReference type="InterPro" id="IPR027417">
    <property type="entry name" value="P-loop_NTPase"/>
</dbReference>
<dbReference type="InterPro" id="IPR004548">
    <property type="entry name" value="PrfC"/>
</dbReference>
<dbReference type="InterPro" id="IPR032090">
    <property type="entry name" value="RF3_C"/>
</dbReference>
<dbReference type="InterPro" id="IPR038467">
    <property type="entry name" value="RF3_dom_3_sf"/>
</dbReference>
<dbReference type="InterPro" id="IPR041732">
    <property type="entry name" value="RF3_GTP-bd"/>
</dbReference>
<dbReference type="InterPro" id="IPR005225">
    <property type="entry name" value="Small_GTP-bd"/>
</dbReference>
<dbReference type="InterPro" id="IPR000795">
    <property type="entry name" value="T_Tr_GTP-bd_dom"/>
</dbReference>
<dbReference type="InterPro" id="IPR009000">
    <property type="entry name" value="Transl_B-barrel_sf"/>
</dbReference>
<dbReference type="NCBIfam" id="TIGR00503">
    <property type="entry name" value="prfC"/>
    <property type="match status" value="1"/>
</dbReference>
<dbReference type="NCBIfam" id="NF001964">
    <property type="entry name" value="PRK00741.1"/>
    <property type="match status" value="1"/>
</dbReference>
<dbReference type="NCBIfam" id="TIGR00231">
    <property type="entry name" value="small_GTP"/>
    <property type="match status" value="1"/>
</dbReference>
<dbReference type="PANTHER" id="PTHR43556">
    <property type="entry name" value="PEPTIDE CHAIN RELEASE FACTOR RF3"/>
    <property type="match status" value="1"/>
</dbReference>
<dbReference type="PANTHER" id="PTHR43556:SF2">
    <property type="entry name" value="PEPTIDE CHAIN RELEASE FACTOR RF3"/>
    <property type="match status" value="1"/>
</dbReference>
<dbReference type="Pfam" id="PF22042">
    <property type="entry name" value="EF-G_D2"/>
    <property type="match status" value="1"/>
</dbReference>
<dbReference type="Pfam" id="PF00009">
    <property type="entry name" value="GTP_EFTU"/>
    <property type="match status" value="1"/>
</dbReference>
<dbReference type="Pfam" id="PF16658">
    <property type="entry name" value="RF3_C"/>
    <property type="match status" value="1"/>
</dbReference>
<dbReference type="PRINTS" id="PR00315">
    <property type="entry name" value="ELONGATNFCT"/>
</dbReference>
<dbReference type="SUPFAM" id="SSF54980">
    <property type="entry name" value="EF-G C-terminal domain-like"/>
    <property type="match status" value="1"/>
</dbReference>
<dbReference type="SUPFAM" id="SSF52540">
    <property type="entry name" value="P-loop containing nucleoside triphosphate hydrolases"/>
    <property type="match status" value="1"/>
</dbReference>
<dbReference type="SUPFAM" id="SSF50447">
    <property type="entry name" value="Translation proteins"/>
    <property type="match status" value="1"/>
</dbReference>
<dbReference type="PROSITE" id="PS00301">
    <property type="entry name" value="G_TR_1"/>
    <property type="match status" value="1"/>
</dbReference>
<dbReference type="PROSITE" id="PS51722">
    <property type="entry name" value="G_TR_2"/>
    <property type="match status" value="1"/>
</dbReference>
<sequence>MSYSQQVNKRRTFAIISHPDAGKTTITEKVLLYGNAIQKAGSVKGKGSQAHAKSDWMEMEKQRGISITTSVMQFPYHDCLVNLLDTPGHEDFSEDTYRTLTAVDSCLMVIDSAKGVEERTIKLMEVTRLRDTPILTFMNKLDRDIRDPMELLDEVESVLKIRCAPITWPIGCGKLFKGVYHLYKDETYLYQSGQGHTIQDVRIIKGLNNVDLDRAVGEDLARQLRDELELVKGASNEFDHDLFIRGELTPVFFGTALGNFGVDHFLDGLTQWAPAPQARQADCRLVESAEEKLTGFVFKIQANMDPKHRDRVAFMRIVSGKYEKGMKLKQVRLGKEVVLSDALTFMAGDRSHAEEAYAGDIIGLHNHGTIQIGDTFTQGEDLKFTGIPNFAPELFRRIRLKDPLKQKQLLKGLVQLSEEGAVQVFRPLTNNDLIVGAVGVLQFDVVVSRLKSEYNVEAVYETVNVAAARWVECSEAKKLEEFKRKNEQNLALDGGDSLTYIAPTMVNLNLTQERYPDIQFFKTREH</sequence>
<comment type="function">
    <text evidence="1">Increases the formation of ribosomal termination complexes and stimulates activities of RF-1 and RF-2. It binds guanine nucleotides and has strong preference for UGA stop codons. It may interact directly with the ribosome. The stimulation of RF-1 and RF-2 is significantly reduced by GTP and GDP, but not by GMP.</text>
</comment>
<comment type="subcellular location">
    <subcellularLocation>
        <location evidence="1">Cytoplasm</location>
    </subcellularLocation>
</comment>
<comment type="similarity">
    <text evidence="1">Belongs to the TRAFAC class translation factor GTPase superfamily. Classic translation factor GTPase family. PrfC subfamily.</text>
</comment>
<feature type="chain" id="PRO_1000071184" description="Peptide chain release factor 3">
    <location>
        <begin position="1"/>
        <end position="526"/>
    </location>
</feature>
<feature type="domain" description="tr-type G">
    <location>
        <begin position="8"/>
        <end position="277"/>
    </location>
</feature>
<feature type="binding site" evidence="1">
    <location>
        <begin position="17"/>
        <end position="24"/>
    </location>
    <ligand>
        <name>GTP</name>
        <dbReference type="ChEBI" id="CHEBI:37565"/>
    </ligand>
</feature>
<feature type="binding site" evidence="1">
    <location>
        <begin position="85"/>
        <end position="89"/>
    </location>
    <ligand>
        <name>GTP</name>
        <dbReference type="ChEBI" id="CHEBI:37565"/>
    </ligand>
</feature>
<feature type="binding site" evidence="1">
    <location>
        <begin position="139"/>
        <end position="142"/>
    </location>
    <ligand>
        <name>GTP</name>
        <dbReference type="ChEBI" id="CHEBI:37565"/>
    </ligand>
</feature>
<evidence type="ECO:0000255" key="1">
    <source>
        <dbReference type="HAMAP-Rule" id="MF_00072"/>
    </source>
</evidence>
<organism>
    <name type="scientific">Histophilus somni (strain 129Pt)</name>
    <name type="common">Haemophilus somnus</name>
    <dbReference type="NCBI Taxonomy" id="205914"/>
    <lineage>
        <taxon>Bacteria</taxon>
        <taxon>Pseudomonadati</taxon>
        <taxon>Pseudomonadota</taxon>
        <taxon>Gammaproteobacteria</taxon>
        <taxon>Pasteurellales</taxon>
        <taxon>Pasteurellaceae</taxon>
        <taxon>Histophilus</taxon>
    </lineage>
</organism>
<keyword id="KW-0963">Cytoplasm</keyword>
<keyword id="KW-0342">GTP-binding</keyword>
<keyword id="KW-0547">Nucleotide-binding</keyword>
<keyword id="KW-0648">Protein biosynthesis</keyword>
<accession>Q0I2G9</accession>
<name>RF3_HISS1</name>
<protein>
    <recommendedName>
        <fullName evidence="1">Peptide chain release factor 3</fullName>
        <shortName evidence="1">RF-3</shortName>
    </recommendedName>
</protein>
<proteinExistence type="inferred from homology"/>
<gene>
    <name evidence="1" type="primary">prfC</name>
    <name type="ordered locus">HS_0384</name>
</gene>